<reference key="1">
    <citation type="journal article" date="2006" name="PLoS Biol.">
        <title>The genome of deep-sea vent chemolithoautotroph Thiomicrospira crunogena XCL-2.</title>
        <authorList>
            <person name="Scott K.M."/>
            <person name="Sievert S.M."/>
            <person name="Abril F.N."/>
            <person name="Ball L.A."/>
            <person name="Barrett C.J."/>
            <person name="Blake R.A."/>
            <person name="Boller A.J."/>
            <person name="Chain P.S.G."/>
            <person name="Clark J.A."/>
            <person name="Davis C.R."/>
            <person name="Detter C."/>
            <person name="Do K.F."/>
            <person name="Dobrinski K.P."/>
            <person name="Faza B.I."/>
            <person name="Fitzpatrick K.A."/>
            <person name="Freyermuth S.K."/>
            <person name="Harmer T.L."/>
            <person name="Hauser L.J."/>
            <person name="Huegler M."/>
            <person name="Kerfeld C.A."/>
            <person name="Klotz M.G."/>
            <person name="Kong W.W."/>
            <person name="Land M."/>
            <person name="Lapidus A."/>
            <person name="Larimer F.W."/>
            <person name="Longo D.L."/>
            <person name="Lucas S."/>
            <person name="Malfatti S.A."/>
            <person name="Massey S.E."/>
            <person name="Martin D.D."/>
            <person name="McCuddin Z."/>
            <person name="Meyer F."/>
            <person name="Moore J.L."/>
            <person name="Ocampo L.H. Jr."/>
            <person name="Paul J.H."/>
            <person name="Paulsen I.T."/>
            <person name="Reep D.K."/>
            <person name="Ren Q."/>
            <person name="Ross R.L."/>
            <person name="Sato P.Y."/>
            <person name="Thomas P."/>
            <person name="Tinkham L.E."/>
            <person name="Zeruth G.T."/>
        </authorList>
    </citation>
    <scope>NUCLEOTIDE SEQUENCE [LARGE SCALE GENOMIC DNA]</scope>
    <source>
        <strain>DSM 25203 / XCL-2</strain>
    </source>
</reference>
<dbReference type="EMBL" id="CP000109">
    <property type="protein sequence ID" value="ABB41304.1"/>
    <property type="molecule type" value="Genomic_DNA"/>
</dbReference>
<dbReference type="SMR" id="Q31HR9"/>
<dbReference type="STRING" id="317025.Tcr_0708"/>
<dbReference type="KEGG" id="tcx:Tcr_0708"/>
<dbReference type="eggNOG" id="COG0333">
    <property type="taxonomic scope" value="Bacteria"/>
</dbReference>
<dbReference type="HOGENOM" id="CLU_129084_2_1_6"/>
<dbReference type="OrthoDB" id="9801927at2"/>
<dbReference type="GO" id="GO:0015934">
    <property type="term" value="C:large ribosomal subunit"/>
    <property type="evidence" value="ECO:0007669"/>
    <property type="project" value="InterPro"/>
</dbReference>
<dbReference type="GO" id="GO:0003735">
    <property type="term" value="F:structural constituent of ribosome"/>
    <property type="evidence" value="ECO:0007669"/>
    <property type="project" value="InterPro"/>
</dbReference>
<dbReference type="GO" id="GO:0006412">
    <property type="term" value="P:translation"/>
    <property type="evidence" value="ECO:0007669"/>
    <property type="project" value="UniProtKB-UniRule"/>
</dbReference>
<dbReference type="HAMAP" id="MF_00340">
    <property type="entry name" value="Ribosomal_bL32"/>
    <property type="match status" value="1"/>
</dbReference>
<dbReference type="InterPro" id="IPR002677">
    <property type="entry name" value="Ribosomal_bL32"/>
</dbReference>
<dbReference type="InterPro" id="IPR044957">
    <property type="entry name" value="Ribosomal_bL32_bact"/>
</dbReference>
<dbReference type="InterPro" id="IPR011332">
    <property type="entry name" value="Ribosomal_zn-bd"/>
</dbReference>
<dbReference type="NCBIfam" id="TIGR01031">
    <property type="entry name" value="rpmF_bact"/>
    <property type="match status" value="1"/>
</dbReference>
<dbReference type="PANTHER" id="PTHR35534">
    <property type="entry name" value="50S RIBOSOMAL PROTEIN L32"/>
    <property type="match status" value="1"/>
</dbReference>
<dbReference type="PANTHER" id="PTHR35534:SF1">
    <property type="entry name" value="LARGE RIBOSOMAL SUBUNIT PROTEIN BL32"/>
    <property type="match status" value="1"/>
</dbReference>
<dbReference type="Pfam" id="PF01783">
    <property type="entry name" value="Ribosomal_L32p"/>
    <property type="match status" value="1"/>
</dbReference>
<dbReference type="SUPFAM" id="SSF57829">
    <property type="entry name" value="Zn-binding ribosomal proteins"/>
    <property type="match status" value="1"/>
</dbReference>
<comment type="similarity">
    <text evidence="1">Belongs to the bacterial ribosomal protein bL32 family.</text>
</comment>
<feature type="chain" id="PRO_0000296592" description="Large ribosomal subunit protein bL32">
    <location>
        <begin position="1"/>
        <end position="57"/>
    </location>
</feature>
<feature type="region of interest" description="Disordered" evidence="2">
    <location>
        <begin position="1"/>
        <end position="37"/>
    </location>
</feature>
<feature type="compositionally biased region" description="Basic residues" evidence="2">
    <location>
        <begin position="1"/>
        <end position="16"/>
    </location>
</feature>
<feature type="compositionally biased region" description="Polar residues" evidence="2">
    <location>
        <begin position="21"/>
        <end position="31"/>
    </location>
</feature>
<sequence>MAVQKSRKTPSRRGMRRSHDALSTTAITVDETTGELHRRHHVTADGYYKGKKVIQDK</sequence>
<protein>
    <recommendedName>
        <fullName evidence="1">Large ribosomal subunit protein bL32</fullName>
    </recommendedName>
    <alternativeName>
        <fullName evidence="3">50S ribosomal protein L32</fullName>
    </alternativeName>
</protein>
<accession>Q31HR9</accession>
<organism>
    <name type="scientific">Hydrogenovibrio crunogenus (strain DSM 25203 / XCL-2)</name>
    <name type="common">Thiomicrospira crunogena</name>
    <dbReference type="NCBI Taxonomy" id="317025"/>
    <lineage>
        <taxon>Bacteria</taxon>
        <taxon>Pseudomonadati</taxon>
        <taxon>Pseudomonadota</taxon>
        <taxon>Gammaproteobacteria</taxon>
        <taxon>Thiotrichales</taxon>
        <taxon>Piscirickettsiaceae</taxon>
        <taxon>Hydrogenovibrio</taxon>
    </lineage>
</organism>
<evidence type="ECO:0000255" key="1">
    <source>
        <dbReference type="HAMAP-Rule" id="MF_00340"/>
    </source>
</evidence>
<evidence type="ECO:0000256" key="2">
    <source>
        <dbReference type="SAM" id="MobiDB-lite"/>
    </source>
</evidence>
<evidence type="ECO:0000305" key="3"/>
<keyword id="KW-0687">Ribonucleoprotein</keyword>
<keyword id="KW-0689">Ribosomal protein</keyword>
<name>RL32_HYDCU</name>
<gene>
    <name evidence="1" type="primary">rpmF</name>
    <name type="ordered locus">Tcr_0708</name>
</gene>
<proteinExistence type="inferred from homology"/>